<dbReference type="EMBL" id="AP006627">
    <property type="protein sequence ID" value="BAD62651.1"/>
    <property type="molecule type" value="Genomic_DNA"/>
</dbReference>
<dbReference type="RefSeq" id="WP_011244972.1">
    <property type="nucleotide sequence ID" value="NC_006582.1"/>
</dbReference>
<dbReference type="SMR" id="Q5WLV4"/>
<dbReference type="STRING" id="66692.ABC0108"/>
<dbReference type="KEGG" id="bcl:ABC0108"/>
<dbReference type="eggNOG" id="COG1281">
    <property type="taxonomic scope" value="Bacteria"/>
</dbReference>
<dbReference type="HOGENOM" id="CLU_054493_1_0_9"/>
<dbReference type="OrthoDB" id="9776534at2"/>
<dbReference type="Proteomes" id="UP000001168">
    <property type="component" value="Chromosome"/>
</dbReference>
<dbReference type="GO" id="GO:0005737">
    <property type="term" value="C:cytoplasm"/>
    <property type="evidence" value="ECO:0007669"/>
    <property type="project" value="UniProtKB-SubCell"/>
</dbReference>
<dbReference type="GO" id="GO:0044183">
    <property type="term" value="F:protein folding chaperone"/>
    <property type="evidence" value="ECO:0007669"/>
    <property type="project" value="TreeGrafter"/>
</dbReference>
<dbReference type="GO" id="GO:0051082">
    <property type="term" value="F:unfolded protein binding"/>
    <property type="evidence" value="ECO:0007669"/>
    <property type="project" value="UniProtKB-UniRule"/>
</dbReference>
<dbReference type="GO" id="GO:0042026">
    <property type="term" value="P:protein refolding"/>
    <property type="evidence" value="ECO:0007669"/>
    <property type="project" value="TreeGrafter"/>
</dbReference>
<dbReference type="CDD" id="cd00498">
    <property type="entry name" value="Hsp33"/>
    <property type="match status" value="1"/>
</dbReference>
<dbReference type="Gene3D" id="3.55.30.10">
    <property type="entry name" value="Hsp33 domain"/>
    <property type="match status" value="1"/>
</dbReference>
<dbReference type="Gene3D" id="3.90.1280.10">
    <property type="entry name" value="HSP33 redox switch-like"/>
    <property type="match status" value="1"/>
</dbReference>
<dbReference type="HAMAP" id="MF_00117">
    <property type="entry name" value="HslO"/>
    <property type="match status" value="1"/>
</dbReference>
<dbReference type="InterPro" id="IPR000397">
    <property type="entry name" value="Heat_shock_Hsp33"/>
</dbReference>
<dbReference type="InterPro" id="IPR016154">
    <property type="entry name" value="Heat_shock_Hsp33_C"/>
</dbReference>
<dbReference type="InterPro" id="IPR016153">
    <property type="entry name" value="Heat_shock_Hsp33_N"/>
</dbReference>
<dbReference type="NCBIfam" id="NF001033">
    <property type="entry name" value="PRK00114.1"/>
    <property type="match status" value="1"/>
</dbReference>
<dbReference type="PANTHER" id="PTHR30111">
    <property type="entry name" value="33 KDA CHAPERONIN"/>
    <property type="match status" value="1"/>
</dbReference>
<dbReference type="PANTHER" id="PTHR30111:SF1">
    <property type="entry name" value="33 KDA CHAPERONIN"/>
    <property type="match status" value="1"/>
</dbReference>
<dbReference type="Pfam" id="PF01430">
    <property type="entry name" value="HSP33"/>
    <property type="match status" value="1"/>
</dbReference>
<dbReference type="PIRSF" id="PIRSF005261">
    <property type="entry name" value="Heat_shock_Hsp33"/>
    <property type="match status" value="1"/>
</dbReference>
<dbReference type="SUPFAM" id="SSF64397">
    <property type="entry name" value="Hsp33 domain"/>
    <property type="match status" value="1"/>
</dbReference>
<dbReference type="SUPFAM" id="SSF118352">
    <property type="entry name" value="HSP33 redox switch-like"/>
    <property type="match status" value="1"/>
</dbReference>
<comment type="function">
    <text evidence="1">Redox regulated molecular chaperone. Protects both thermally unfolding and oxidatively damaged proteins from irreversible aggregation. Plays an important role in the bacterial defense system toward oxidative stress.</text>
</comment>
<comment type="subcellular location">
    <subcellularLocation>
        <location evidence="1">Cytoplasm</location>
    </subcellularLocation>
</comment>
<comment type="PTM">
    <text evidence="1">Under oxidizing conditions two disulfide bonds are formed involving the reactive cysteines. Under reducing conditions zinc is bound to the reactive cysteines and the protein is inactive.</text>
</comment>
<comment type="similarity">
    <text evidence="1">Belongs to the HSP33 family.</text>
</comment>
<keyword id="KW-0143">Chaperone</keyword>
<keyword id="KW-0963">Cytoplasm</keyword>
<keyword id="KW-1015">Disulfide bond</keyword>
<keyword id="KW-0676">Redox-active center</keyword>
<keyword id="KW-1185">Reference proteome</keyword>
<keyword id="KW-0862">Zinc</keyword>
<evidence type="ECO:0000255" key="1">
    <source>
        <dbReference type="HAMAP-Rule" id="MF_00117"/>
    </source>
</evidence>
<proteinExistence type="inferred from homology"/>
<sequence length="295" mass="31389">MKDYVVKATAYDGEVRAIALRATEMVKEACKRQGTWPTASAALGRTMMGGALMASMLKGKDKLTVRIQGNGPIGEIIVDAHASGATRGTVTNPHVSPELNSKGKLDVARVVGTEGTLSVVKDLGMKEPFTGSVPIVSGEIGDDFTYYFANSEQTPSSVGVGVLVNPDESVLAAGGFVIQLLPGAKEATITEIEKRIGETPPISKLVEQGKTPEEIINGLLGEENVKFLETKPVFFECSCSKERIGNAIISLGTKEIEAMITEDGGAETVCHFCNESYSFTEAELKALLEEAESKR</sequence>
<feature type="chain" id="PRO_0000238060" description="33 kDa chaperonin">
    <location>
        <begin position="1"/>
        <end position="295"/>
    </location>
</feature>
<feature type="disulfide bond" description="Redox-active" evidence="1">
    <location>
        <begin position="237"/>
        <end position="239"/>
    </location>
</feature>
<feature type="disulfide bond" description="Redox-active" evidence="1">
    <location>
        <begin position="270"/>
        <end position="273"/>
    </location>
</feature>
<name>HSLO_SHOC1</name>
<gene>
    <name evidence="1" type="primary">hslO</name>
    <name type="ordered locus">ABC0108</name>
</gene>
<organism>
    <name type="scientific">Shouchella clausii (strain KSM-K16)</name>
    <name type="common">Alkalihalobacillus clausii</name>
    <dbReference type="NCBI Taxonomy" id="66692"/>
    <lineage>
        <taxon>Bacteria</taxon>
        <taxon>Bacillati</taxon>
        <taxon>Bacillota</taxon>
        <taxon>Bacilli</taxon>
        <taxon>Bacillales</taxon>
        <taxon>Bacillaceae</taxon>
        <taxon>Shouchella</taxon>
    </lineage>
</organism>
<reference key="1">
    <citation type="submission" date="2003-10" db="EMBL/GenBank/DDBJ databases">
        <title>The complete genome sequence of the alkaliphilic Bacillus clausii KSM-K16.</title>
        <authorList>
            <person name="Takaki Y."/>
            <person name="Kageyama Y."/>
            <person name="Shimamura S."/>
            <person name="Suzuki H."/>
            <person name="Nishi S."/>
            <person name="Hatada Y."/>
            <person name="Kawai S."/>
            <person name="Ito S."/>
            <person name="Horikoshi K."/>
        </authorList>
    </citation>
    <scope>NUCLEOTIDE SEQUENCE [LARGE SCALE GENOMIC DNA]</scope>
    <source>
        <strain>KSM-K16</strain>
    </source>
</reference>
<accession>Q5WLV4</accession>
<protein>
    <recommendedName>
        <fullName evidence="1">33 kDa chaperonin</fullName>
    </recommendedName>
    <alternativeName>
        <fullName evidence="1">Heat shock protein 33 homolog</fullName>
        <shortName evidence="1">HSP33</shortName>
    </alternativeName>
</protein>